<gene>
    <name evidence="1" type="primary">serC</name>
    <name type="ordered locus">Bphy_0740</name>
</gene>
<accession>B2JF00</accession>
<evidence type="ECO:0000255" key="1">
    <source>
        <dbReference type="HAMAP-Rule" id="MF_00160"/>
    </source>
</evidence>
<sequence length="360" mass="39611">MRVFNFSAGPAAMPEEVLRQAADEMLDWGGSGMSVMEMSHRGKEFMTIHEEALTDLRELLQVPSSHHILFLQGGGLGENAIVPMNLMGRKARADFVVTGSWSQKSFKEAQKYGTVHLAASGETANGFTHVPARAEWSLSDDPAYVHLCTNETIHGVETFEIPDLGDIPLVADASSHILSRPMDIAKYGVLFGGAQKNIGMAGVTVVIVREDLLERSMSICPSAFEWKTVALNNSMYNTPPTYAIYIAGLVFKWLKKQGGLTAIEARNVEKAKLLYDTIDSSSFYLNKVERNARSRMNVPFFLADESRNEDFLAGAKARGLVQLKGHKSVGGMRASIYNAVPLEGVKALVEYMREFEQRGA</sequence>
<comment type="function">
    <text evidence="1">Catalyzes the reversible conversion of 3-phosphohydroxypyruvate to phosphoserine and of 3-hydroxy-2-oxo-4-phosphonooxybutanoate to phosphohydroxythreonine.</text>
</comment>
<comment type="catalytic activity">
    <reaction evidence="1">
        <text>O-phospho-L-serine + 2-oxoglutarate = 3-phosphooxypyruvate + L-glutamate</text>
        <dbReference type="Rhea" id="RHEA:14329"/>
        <dbReference type="ChEBI" id="CHEBI:16810"/>
        <dbReference type="ChEBI" id="CHEBI:18110"/>
        <dbReference type="ChEBI" id="CHEBI:29985"/>
        <dbReference type="ChEBI" id="CHEBI:57524"/>
        <dbReference type="EC" id="2.6.1.52"/>
    </reaction>
</comment>
<comment type="catalytic activity">
    <reaction evidence="1">
        <text>4-(phosphooxy)-L-threonine + 2-oxoglutarate = (R)-3-hydroxy-2-oxo-4-phosphooxybutanoate + L-glutamate</text>
        <dbReference type="Rhea" id="RHEA:16573"/>
        <dbReference type="ChEBI" id="CHEBI:16810"/>
        <dbReference type="ChEBI" id="CHEBI:29985"/>
        <dbReference type="ChEBI" id="CHEBI:58452"/>
        <dbReference type="ChEBI" id="CHEBI:58538"/>
        <dbReference type="EC" id="2.6.1.52"/>
    </reaction>
</comment>
<comment type="cofactor">
    <cofactor evidence="1">
        <name>pyridoxal 5'-phosphate</name>
        <dbReference type="ChEBI" id="CHEBI:597326"/>
    </cofactor>
    <text evidence="1">Binds 1 pyridoxal phosphate per subunit.</text>
</comment>
<comment type="pathway">
    <text evidence="1">Amino-acid biosynthesis; L-serine biosynthesis; L-serine from 3-phospho-D-glycerate: step 2/3.</text>
</comment>
<comment type="pathway">
    <text evidence="1">Cofactor biosynthesis; pyridoxine 5'-phosphate biosynthesis; pyridoxine 5'-phosphate from D-erythrose 4-phosphate: step 3/5.</text>
</comment>
<comment type="subunit">
    <text evidence="1">Homodimer.</text>
</comment>
<comment type="subcellular location">
    <subcellularLocation>
        <location evidence="1">Cytoplasm</location>
    </subcellularLocation>
</comment>
<comment type="similarity">
    <text evidence="1">Belongs to the class-V pyridoxal-phosphate-dependent aminotransferase family. SerC subfamily.</text>
</comment>
<dbReference type="EC" id="2.6.1.52" evidence="1"/>
<dbReference type="EMBL" id="CP001043">
    <property type="protein sequence ID" value="ACC69929.1"/>
    <property type="molecule type" value="Genomic_DNA"/>
</dbReference>
<dbReference type="RefSeq" id="WP_012400149.1">
    <property type="nucleotide sequence ID" value="NC_010622.1"/>
</dbReference>
<dbReference type="SMR" id="B2JF00"/>
<dbReference type="STRING" id="391038.Bphy_0740"/>
<dbReference type="KEGG" id="bph:Bphy_0740"/>
<dbReference type="eggNOG" id="COG1932">
    <property type="taxonomic scope" value="Bacteria"/>
</dbReference>
<dbReference type="HOGENOM" id="CLU_034866_0_2_4"/>
<dbReference type="OrthoDB" id="9809412at2"/>
<dbReference type="UniPathway" id="UPA00135">
    <property type="reaction ID" value="UER00197"/>
</dbReference>
<dbReference type="UniPathway" id="UPA00244">
    <property type="reaction ID" value="UER00311"/>
</dbReference>
<dbReference type="Proteomes" id="UP000001192">
    <property type="component" value="Chromosome 1"/>
</dbReference>
<dbReference type="GO" id="GO:0005737">
    <property type="term" value="C:cytoplasm"/>
    <property type="evidence" value="ECO:0007669"/>
    <property type="project" value="UniProtKB-SubCell"/>
</dbReference>
<dbReference type="GO" id="GO:0004648">
    <property type="term" value="F:O-phospho-L-serine:2-oxoglutarate aminotransferase activity"/>
    <property type="evidence" value="ECO:0007669"/>
    <property type="project" value="UniProtKB-UniRule"/>
</dbReference>
<dbReference type="GO" id="GO:0030170">
    <property type="term" value="F:pyridoxal phosphate binding"/>
    <property type="evidence" value="ECO:0007669"/>
    <property type="project" value="UniProtKB-UniRule"/>
</dbReference>
<dbReference type="GO" id="GO:0006564">
    <property type="term" value="P:L-serine biosynthetic process"/>
    <property type="evidence" value="ECO:0007669"/>
    <property type="project" value="UniProtKB-UniRule"/>
</dbReference>
<dbReference type="GO" id="GO:0008615">
    <property type="term" value="P:pyridoxine biosynthetic process"/>
    <property type="evidence" value="ECO:0007669"/>
    <property type="project" value="UniProtKB-UniRule"/>
</dbReference>
<dbReference type="CDD" id="cd00611">
    <property type="entry name" value="PSAT_like"/>
    <property type="match status" value="1"/>
</dbReference>
<dbReference type="FunFam" id="3.40.640.10:FF:000010">
    <property type="entry name" value="Phosphoserine aminotransferase"/>
    <property type="match status" value="1"/>
</dbReference>
<dbReference type="FunFam" id="3.90.1150.10:FF:000006">
    <property type="entry name" value="Phosphoserine aminotransferase"/>
    <property type="match status" value="1"/>
</dbReference>
<dbReference type="Gene3D" id="3.90.1150.10">
    <property type="entry name" value="Aspartate Aminotransferase, domain 1"/>
    <property type="match status" value="1"/>
</dbReference>
<dbReference type="Gene3D" id="3.40.640.10">
    <property type="entry name" value="Type I PLP-dependent aspartate aminotransferase-like (Major domain)"/>
    <property type="match status" value="1"/>
</dbReference>
<dbReference type="HAMAP" id="MF_00160">
    <property type="entry name" value="SerC_aminotrans_5"/>
    <property type="match status" value="1"/>
</dbReference>
<dbReference type="InterPro" id="IPR000192">
    <property type="entry name" value="Aminotrans_V_dom"/>
</dbReference>
<dbReference type="InterPro" id="IPR020578">
    <property type="entry name" value="Aminotrans_V_PyrdxlP_BS"/>
</dbReference>
<dbReference type="InterPro" id="IPR022278">
    <property type="entry name" value="Pser_aminoTfrase"/>
</dbReference>
<dbReference type="InterPro" id="IPR015424">
    <property type="entry name" value="PyrdxlP-dep_Trfase"/>
</dbReference>
<dbReference type="InterPro" id="IPR015421">
    <property type="entry name" value="PyrdxlP-dep_Trfase_major"/>
</dbReference>
<dbReference type="InterPro" id="IPR015422">
    <property type="entry name" value="PyrdxlP-dep_Trfase_small"/>
</dbReference>
<dbReference type="NCBIfam" id="NF003764">
    <property type="entry name" value="PRK05355.1"/>
    <property type="match status" value="1"/>
</dbReference>
<dbReference type="NCBIfam" id="TIGR01364">
    <property type="entry name" value="serC_1"/>
    <property type="match status" value="1"/>
</dbReference>
<dbReference type="PANTHER" id="PTHR43247">
    <property type="entry name" value="PHOSPHOSERINE AMINOTRANSFERASE"/>
    <property type="match status" value="1"/>
</dbReference>
<dbReference type="PANTHER" id="PTHR43247:SF1">
    <property type="entry name" value="PHOSPHOSERINE AMINOTRANSFERASE"/>
    <property type="match status" value="1"/>
</dbReference>
<dbReference type="Pfam" id="PF00266">
    <property type="entry name" value="Aminotran_5"/>
    <property type="match status" value="1"/>
</dbReference>
<dbReference type="PIRSF" id="PIRSF000525">
    <property type="entry name" value="SerC"/>
    <property type="match status" value="1"/>
</dbReference>
<dbReference type="SUPFAM" id="SSF53383">
    <property type="entry name" value="PLP-dependent transferases"/>
    <property type="match status" value="1"/>
</dbReference>
<dbReference type="PROSITE" id="PS00595">
    <property type="entry name" value="AA_TRANSFER_CLASS_5"/>
    <property type="match status" value="1"/>
</dbReference>
<protein>
    <recommendedName>
        <fullName evidence="1">Phosphoserine aminotransferase</fullName>
        <ecNumber evidence="1">2.6.1.52</ecNumber>
    </recommendedName>
    <alternativeName>
        <fullName evidence="1">Phosphohydroxythreonine aminotransferase</fullName>
        <shortName evidence="1">PSAT</shortName>
    </alternativeName>
</protein>
<keyword id="KW-0028">Amino-acid biosynthesis</keyword>
<keyword id="KW-0032">Aminotransferase</keyword>
<keyword id="KW-0963">Cytoplasm</keyword>
<keyword id="KW-0663">Pyridoxal phosphate</keyword>
<keyword id="KW-0664">Pyridoxine biosynthesis</keyword>
<keyword id="KW-1185">Reference proteome</keyword>
<keyword id="KW-0718">Serine biosynthesis</keyword>
<keyword id="KW-0808">Transferase</keyword>
<proteinExistence type="inferred from homology"/>
<name>SERC_PARP8</name>
<reference key="1">
    <citation type="journal article" date="2014" name="Stand. Genomic Sci.">
        <title>Complete genome sequence of Burkholderia phymatum STM815(T), a broad host range and efficient nitrogen-fixing symbiont of Mimosa species.</title>
        <authorList>
            <person name="Moulin L."/>
            <person name="Klonowska A."/>
            <person name="Caroline B."/>
            <person name="Booth K."/>
            <person name="Vriezen J.A."/>
            <person name="Melkonian R."/>
            <person name="James E.K."/>
            <person name="Young J.P."/>
            <person name="Bena G."/>
            <person name="Hauser L."/>
            <person name="Land M."/>
            <person name="Kyrpides N."/>
            <person name="Bruce D."/>
            <person name="Chain P."/>
            <person name="Copeland A."/>
            <person name="Pitluck S."/>
            <person name="Woyke T."/>
            <person name="Lizotte-Waniewski M."/>
            <person name="Bristow J."/>
            <person name="Riley M."/>
        </authorList>
    </citation>
    <scope>NUCLEOTIDE SEQUENCE [LARGE SCALE GENOMIC DNA]</scope>
    <source>
        <strain>DSM 17167 / CIP 108236 / LMG 21445 / STM815</strain>
    </source>
</reference>
<feature type="chain" id="PRO_1000097208" description="Phosphoserine aminotransferase">
    <location>
        <begin position="1"/>
        <end position="360"/>
    </location>
</feature>
<feature type="binding site" evidence="1">
    <location>
        <position position="41"/>
    </location>
    <ligand>
        <name>L-glutamate</name>
        <dbReference type="ChEBI" id="CHEBI:29985"/>
    </ligand>
</feature>
<feature type="binding site" evidence="1">
    <location>
        <position position="101"/>
    </location>
    <ligand>
        <name>pyridoxal 5'-phosphate</name>
        <dbReference type="ChEBI" id="CHEBI:597326"/>
    </ligand>
</feature>
<feature type="binding site" evidence="1">
    <location>
        <position position="152"/>
    </location>
    <ligand>
        <name>pyridoxal 5'-phosphate</name>
        <dbReference type="ChEBI" id="CHEBI:597326"/>
    </ligand>
</feature>
<feature type="binding site" evidence="1">
    <location>
        <position position="172"/>
    </location>
    <ligand>
        <name>pyridoxal 5'-phosphate</name>
        <dbReference type="ChEBI" id="CHEBI:597326"/>
    </ligand>
</feature>
<feature type="binding site" evidence="1">
    <location>
        <position position="195"/>
    </location>
    <ligand>
        <name>pyridoxal 5'-phosphate</name>
        <dbReference type="ChEBI" id="CHEBI:597326"/>
    </ligand>
</feature>
<feature type="binding site" evidence="1">
    <location>
        <begin position="237"/>
        <end position="238"/>
    </location>
    <ligand>
        <name>pyridoxal 5'-phosphate</name>
        <dbReference type="ChEBI" id="CHEBI:597326"/>
    </ligand>
</feature>
<feature type="modified residue" description="N6-(pyridoxal phosphate)lysine" evidence="1">
    <location>
        <position position="196"/>
    </location>
</feature>
<organism>
    <name type="scientific">Paraburkholderia phymatum (strain DSM 17167 / CIP 108236 / LMG 21445 / STM815)</name>
    <name type="common">Burkholderia phymatum</name>
    <dbReference type="NCBI Taxonomy" id="391038"/>
    <lineage>
        <taxon>Bacteria</taxon>
        <taxon>Pseudomonadati</taxon>
        <taxon>Pseudomonadota</taxon>
        <taxon>Betaproteobacteria</taxon>
        <taxon>Burkholderiales</taxon>
        <taxon>Burkholderiaceae</taxon>
        <taxon>Paraburkholderia</taxon>
    </lineage>
</organism>